<gene>
    <name evidence="1" type="primary">rplT</name>
    <name type="ordered locus">Geob_3362</name>
</gene>
<feature type="chain" id="PRO_1000193962" description="Large ribosomal subunit protein bL20">
    <location>
        <begin position="1"/>
        <end position="117"/>
    </location>
</feature>
<protein>
    <recommendedName>
        <fullName evidence="1">Large ribosomal subunit protein bL20</fullName>
    </recommendedName>
    <alternativeName>
        <fullName evidence="2">50S ribosomal protein L20</fullName>
    </alternativeName>
</protein>
<evidence type="ECO:0000255" key="1">
    <source>
        <dbReference type="HAMAP-Rule" id="MF_00382"/>
    </source>
</evidence>
<evidence type="ECO:0000305" key="2"/>
<dbReference type="EMBL" id="CP001390">
    <property type="protein sequence ID" value="ACM21705.1"/>
    <property type="molecule type" value="Genomic_DNA"/>
</dbReference>
<dbReference type="RefSeq" id="WP_012648433.1">
    <property type="nucleotide sequence ID" value="NC_011979.1"/>
</dbReference>
<dbReference type="SMR" id="B9M521"/>
<dbReference type="STRING" id="316067.Geob_3362"/>
<dbReference type="KEGG" id="geo:Geob_3362"/>
<dbReference type="eggNOG" id="COG0292">
    <property type="taxonomic scope" value="Bacteria"/>
</dbReference>
<dbReference type="HOGENOM" id="CLU_123265_0_1_7"/>
<dbReference type="OrthoDB" id="9808966at2"/>
<dbReference type="Proteomes" id="UP000007721">
    <property type="component" value="Chromosome"/>
</dbReference>
<dbReference type="GO" id="GO:1990904">
    <property type="term" value="C:ribonucleoprotein complex"/>
    <property type="evidence" value="ECO:0007669"/>
    <property type="project" value="UniProtKB-KW"/>
</dbReference>
<dbReference type="GO" id="GO:0005840">
    <property type="term" value="C:ribosome"/>
    <property type="evidence" value="ECO:0007669"/>
    <property type="project" value="UniProtKB-KW"/>
</dbReference>
<dbReference type="GO" id="GO:0019843">
    <property type="term" value="F:rRNA binding"/>
    <property type="evidence" value="ECO:0007669"/>
    <property type="project" value="UniProtKB-UniRule"/>
</dbReference>
<dbReference type="GO" id="GO:0003735">
    <property type="term" value="F:structural constituent of ribosome"/>
    <property type="evidence" value="ECO:0007669"/>
    <property type="project" value="InterPro"/>
</dbReference>
<dbReference type="GO" id="GO:0000027">
    <property type="term" value="P:ribosomal large subunit assembly"/>
    <property type="evidence" value="ECO:0007669"/>
    <property type="project" value="UniProtKB-UniRule"/>
</dbReference>
<dbReference type="GO" id="GO:0006412">
    <property type="term" value="P:translation"/>
    <property type="evidence" value="ECO:0007669"/>
    <property type="project" value="InterPro"/>
</dbReference>
<dbReference type="CDD" id="cd07026">
    <property type="entry name" value="Ribosomal_L20"/>
    <property type="match status" value="1"/>
</dbReference>
<dbReference type="FunFam" id="1.10.1900.20:FF:000001">
    <property type="entry name" value="50S ribosomal protein L20"/>
    <property type="match status" value="1"/>
</dbReference>
<dbReference type="Gene3D" id="6.10.160.10">
    <property type="match status" value="1"/>
</dbReference>
<dbReference type="Gene3D" id="1.10.1900.20">
    <property type="entry name" value="Ribosomal protein L20"/>
    <property type="match status" value="1"/>
</dbReference>
<dbReference type="HAMAP" id="MF_00382">
    <property type="entry name" value="Ribosomal_bL20"/>
    <property type="match status" value="1"/>
</dbReference>
<dbReference type="InterPro" id="IPR005813">
    <property type="entry name" value="Ribosomal_bL20"/>
</dbReference>
<dbReference type="InterPro" id="IPR049946">
    <property type="entry name" value="RIBOSOMAL_L20_CS"/>
</dbReference>
<dbReference type="InterPro" id="IPR035566">
    <property type="entry name" value="Ribosomal_protein_bL20_C"/>
</dbReference>
<dbReference type="NCBIfam" id="TIGR01032">
    <property type="entry name" value="rplT_bact"/>
    <property type="match status" value="1"/>
</dbReference>
<dbReference type="PANTHER" id="PTHR10986">
    <property type="entry name" value="39S RIBOSOMAL PROTEIN L20"/>
    <property type="match status" value="1"/>
</dbReference>
<dbReference type="Pfam" id="PF00453">
    <property type="entry name" value="Ribosomal_L20"/>
    <property type="match status" value="1"/>
</dbReference>
<dbReference type="PRINTS" id="PR00062">
    <property type="entry name" value="RIBOSOMALL20"/>
</dbReference>
<dbReference type="SUPFAM" id="SSF74731">
    <property type="entry name" value="Ribosomal protein L20"/>
    <property type="match status" value="1"/>
</dbReference>
<dbReference type="PROSITE" id="PS00937">
    <property type="entry name" value="RIBOSOMAL_L20"/>
    <property type="match status" value="1"/>
</dbReference>
<accession>B9M521</accession>
<name>RL20_GEODF</name>
<comment type="function">
    <text evidence="1">Binds directly to 23S ribosomal RNA and is necessary for the in vitro assembly process of the 50S ribosomal subunit. It is not involved in the protein synthesizing functions of that subunit.</text>
</comment>
<comment type="similarity">
    <text evidence="1">Belongs to the bacterial ribosomal protein bL20 family.</text>
</comment>
<reference key="1">
    <citation type="submission" date="2009-01" db="EMBL/GenBank/DDBJ databases">
        <title>Complete sequence of Geobacter sp. FRC-32.</title>
        <authorList>
            <consortium name="US DOE Joint Genome Institute"/>
            <person name="Lucas S."/>
            <person name="Copeland A."/>
            <person name="Lapidus A."/>
            <person name="Glavina del Rio T."/>
            <person name="Dalin E."/>
            <person name="Tice H."/>
            <person name="Bruce D."/>
            <person name="Goodwin L."/>
            <person name="Pitluck S."/>
            <person name="Saunders E."/>
            <person name="Brettin T."/>
            <person name="Detter J.C."/>
            <person name="Han C."/>
            <person name="Larimer F."/>
            <person name="Land M."/>
            <person name="Hauser L."/>
            <person name="Kyrpides N."/>
            <person name="Ovchinnikova G."/>
            <person name="Kostka J."/>
            <person name="Richardson P."/>
        </authorList>
    </citation>
    <scope>NUCLEOTIDE SEQUENCE [LARGE SCALE GENOMIC DNA]</scope>
    <source>
        <strain>DSM 22248 / JCM 15807 / FRC-32</strain>
    </source>
</reference>
<sequence length="117" mass="13342">MPRVKRGFKARQRRNKVLKLAKGYRGARSKLFRSATEAVDRALNYAFRDRRVKKRDFRALWITRINAAARINGISYSKLIHGLKQAKVEVDRKVMADLAVSDPRGFAEIVSLAKANA</sequence>
<organism>
    <name type="scientific">Geotalea daltonii (strain DSM 22248 / JCM 15807 / FRC-32)</name>
    <name type="common">Geobacter daltonii</name>
    <dbReference type="NCBI Taxonomy" id="316067"/>
    <lineage>
        <taxon>Bacteria</taxon>
        <taxon>Pseudomonadati</taxon>
        <taxon>Thermodesulfobacteriota</taxon>
        <taxon>Desulfuromonadia</taxon>
        <taxon>Geobacterales</taxon>
        <taxon>Geobacteraceae</taxon>
        <taxon>Geotalea</taxon>
    </lineage>
</organism>
<keyword id="KW-1185">Reference proteome</keyword>
<keyword id="KW-0687">Ribonucleoprotein</keyword>
<keyword id="KW-0689">Ribosomal protein</keyword>
<keyword id="KW-0694">RNA-binding</keyword>
<keyword id="KW-0699">rRNA-binding</keyword>
<proteinExistence type="inferred from homology"/>